<gene>
    <name type="primary">PPM1L</name>
    <name type="synonym">PP2CE</name>
</gene>
<keyword id="KW-0378">Hydrolase</keyword>
<keyword id="KW-0460">Magnesium</keyword>
<keyword id="KW-0464">Manganese</keyword>
<keyword id="KW-0472">Membrane</keyword>
<keyword id="KW-0479">Metal-binding</keyword>
<keyword id="KW-0904">Protein phosphatase</keyword>
<keyword id="KW-1185">Reference proteome</keyword>
<keyword id="KW-0812">Transmembrane</keyword>
<keyword id="KW-1133">Transmembrane helix</keyword>
<dbReference type="EC" id="3.1.3.16"/>
<dbReference type="EMBL" id="BC142293">
    <property type="protein sequence ID" value="AAI42294.1"/>
    <property type="molecule type" value="mRNA"/>
</dbReference>
<dbReference type="RefSeq" id="NP_001092588.1">
    <property type="nucleotide sequence ID" value="NM_001099118.2"/>
</dbReference>
<dbReference type="SMR" id="A5PJZ2"/>
<dbReference type="FunCoup" id="A5PJZ2">
    <property type="interactions" value="529"/>
</dbReference>
<dbReference type="STRING" id="9913.ENSBTAP00000050151"/>
<dbReference type="PaxDb" id="9913-ENSBTAP00000050151"/>
<dbReference type="GeneID" id="541235"/>
<dbReference type="KEGG" id="bta:541235"/>
<dbReference type="CTD" id="151742"/>
<dbReference type="eggNOG" id="KOG0698">
    <property type="taxonomic scope" value="Eukaryota"/>
</dbReference>
<dbReference type="HOGENOM" id="CLU_013173_11_0_1"/>
<dbReference type="InParanoid" id="A5PJZ2"/>
<dbReference type="OrthoDB" id="343114at2759"/>
<dbReference type="TreeFam" id="TF332888"/>
<dbReference type="Proteomes" id="UP000009136">
    <property type="component" value="Unplaced"/>
</dbReference>
<dbReference type="GO" id="GO:0016020">
    <property type="term" value="C:membrane"/>
    <property type="evidence" value="ECO:0007669"/>
    <property type="project" value="UniProtKB-SubCell"/>
</dbReference>
<dbReference type="GO" id="GO:0046872">
    <property type="term" value="F:metal ion binding"/>
    <property type="evidence" value="ECO:0007669"/>
    <property type="project" value="UniProtKB-KW"/>
</dbReference>
<dbReference type="GO" id="GO:0004722">
    <property type="term" value="F:protein serine/threonine phosphatase activity"/>
    <property type="evidence" value="ECO:0007669"/>
    <property type="project" value="UniProtKB-EC"/>
</dbReference>
<dbReference type="GO" id="GO:0007165">
    <property type="term" value="P:signal transduction"/>
    <property type="evidence" value="ECO:0000318"/>
    <property type="project" value="GO_Central"/>
</dbReference>
<dbReference type="CDD" id="cd00143">
    <property type="entry name" value="PP2Cc"/>
    <property type="match status" value="1"/>
</dbReference>
<dbReference type="FunFam" id="3.60.40.10:FF:000017">
    <property type="entry name" value="phosphatase 1L isoform X1"/>
    <property type="match status" value="1"/>
</dbReference>
<dbReference type="Gene3D" id="3.60.40.10">
    <property type="entry name" value="PPM-type phosphatase domain"/>
    <property type="match status" value="1"/>
</dbReference>
<dbReference type="InterPro" id="IPR015655">
    <property type="entry name" value="PP2C"/>
</dbReference>
<dbReference type="InterPro" id="IPR000222">
    <property type="entry name" value="PP2C_BS"/>
</dbReference>
<dbReference type="InterPro" id="IPR036457">
    <property type="entry name" value="PPM-type-like_dom_sf"/>
</dbReference>
<dbReference type="InterPro" id="IPR001932">
    <property type="entry name" value="PPM-type_phosphatase-like_dom"/>
</dbReference>
<dbReference type="PANTHER" id="PTHR47992">
    <property type="entry name" value="PROTEIN PHOSPHATASE"/>
    <property type="match status" value="1"/>
</dbReference>
<dbReference type="Pfam" id="PF00481">
    <property type="entry name" value="PP2C"/>
    <property type="match status" value="1"/>
</dbReference>
<dbReference type="SMART" id="SM00331">
    <property type="entry name" value="PP2C_SIG"/>
    <property type="match status" value="1"/>
</dbReference>
<dbReference type="SMART" id="SM00332">
    <property type="entry name" value="PP2Cc"/>
    <property type="match status" value="1"/>
</dbReference>
<dbReference type="SUPFAM" id="SSF81606">
    <property type="entry name" value="PP2C-like"/>
    <property type="match status" value="1"/>
</dbReference>
<dbReference type="PROSITE" id="PS01032">
    <property type="entry name" value="PPM_1"/>
    <property type="match status" value="1"/>
</dbReference>
<dbReference type="PROSITE" id="PS51746">
    <property type="entry name" value="PPM_2"/>
    <property type="match status" value="1"/>
</dbReference>
<accession>A5PJZ2</accession>
<feature type="chain" id="PRO_0000354704" description="Protein phosphatase 1L">
    <location>
        <begin position="1"/>
        <end position="360"/>
    </location>
</feature>
<feature type="topological domain" description="Extracellular" evidence="2">
    <location>
        <begin position="1"/>
        <end position="25"/>
    </location>
</feature>
<feature type="transmembrane region" description="Helical" evidence="2">
    <location>
        <begin position="26"/>
        <end position="42"/>
    </location>
</feature>
<feature type="topological domain" description="Cytoplasmic" evidence="2">
    <location>
        <begin position="43"/>
        <end position="360"/>
    </location>
</feature>
<feature type="domain" description="PPM-type phosphatase" evidence="3">
    <location>
        <begin position="92"/>
        <end position="351"/>
    </location>
</feature>
<feature type="binding site" evidence="1">
    <location>
        <position position="128"/>
    </location>
    <ligand>
        <name>Mn(2+)</name>
        <dbReference type="ChEBI" id="CHEBI:29035"/>
        <label>1</label>
    </ligand>
</feature>
<feature type="binding site" evidence="1">
    <location>
        <position position="128"/>
    </location>
    <ligand>
        <name>Mn(2+)</name>
        <dbReference type="ChEBI" id="CHEBI:29035"/>
        <label>2</label>
    </ligand>
</feature>
<feature type="binding site" evidence="1">
    <location>
        <position position="129"/>
    </location>
    <ligand>
        <name>Mn(2+)</name>
        <dbReference type="ChEBI" id="CHEBI:29035"/>
        <label>1</label>
    </ligand>
</feature>
<feature type="binding site" evidence="1">
    <location>
        <position position="302"/>
    </location>
    <ligand>
        <name>Mn(2+)</name>
        <dbReference type="ChEBI" id="CHEBI:29035"/>
        <label>2</label>
    </ligand>
</feature>
<feature type="binding site" evidence="1">
    <location>
        <position position="342"/>
    </location>
    <ligand>
        <name>Mn(2+)</name>
        <dbReference type="ChEBI" id="CHEBI:29035"/>
        <label>2</label>
    </ligand>
</feature>
<sequence length="360" mass="41042">MIEDTMTLLSLLGRIMRYFLLRPETLFLLCISLALWSYFFHTDEVKTIVKSSRDAVKMVKGKVAEIMQNDRLGGLDVLEAEFSKTWEFKSHNVAVYSIQGRRDHMEDRFEVLMDLANKTHPSIFGIFDGHGGETAAEYVKSRLPEALKQHLQDYEKDKENSVLSYQTILEQQILSIDREMLEKLTVSYDEAGTTCLIALLSDKDLTVANVGDSRGVLCDKDGNAIPLSHDHKPYQLKERKRIKRAGGFISFNGSWRVQGILAMSRSLGDYPLKNLNVVIPDPDILTFDLDKLQPEFMILASDGLWDAFSNEEAVRFIKDRLDEPHFGAKSIVLQSFYRGCPDNITVMVVKFRNSSKTEEQ</sequence>
<reference key="1">
    <citation type="submission" date="2007-06" db="EMBL/GenBank/DDBJ databases">
        <authorList>
            <consortium name="NIH - Mammalian Gene Collection (MGC) project"/>
        </authorList>
    </citation>
    <scope>NUCLEOTIDE SEQUENCE [LARGE SCALE MRNA]</scope>
    <source>
        <strain>Hereford</strain>
        <tissue>Hypothalamus</tissue>
    </source>
</reference>
<proteinExistence type="evidence at transcript level"/>
<evidence type="ECO:0000250" key="1"/>
<evidence type="ECO:0000255" key="2"/>
<evidence type="ECO:0000255" key="3">
    <source>
        <dbReference type="PROSITE-ProRule" id="PRU01082"/>
    </source>
</evidence>
<evidence type="ECO:0000305" key="4"/>
<name>PPM1L_BOVIN</name>
<protein>
    <recommendedName>
        <fullName>Protein phosphatase 1L</fullName>
        <ecNumber>3.1.3.16</ecNumber>
    </recommendedName>
    <alternativeName>
        <fullName>Protein phosphatase 1-like</fullName>
    </alternativeName>
    <alternativeName>
        <fullName>Protein phosphatase 2C isoform epsilon</fullName>
        <shortName>PP2C-epsilon</shortName>
    </alternativeName>
</protein>
<comment type="function">
    <text evidence="1">Acts as a suppressor of the SAPK signaling pathways by associating with and dephosphorylating MAP3K7/TAK1 and MAP3K5, and by attenuating the association between MAP3K7/TAK1 and MAP2K4 or MAP2K6.</text>
</comment>
<comment type="catalytic activity">
    <reaction>
        <text>O-phospho-L-seryl-[protein] + H2O = L-seryl-[protein] + phosphate</text>
        <dbReference type="Rhea" id="RHEA:20629"/>
        <dbReference type="Rhea" id="RHEA-COMP:9863"/>
        <dbReference type="Rhea" id="RHEA-COMP:11604"/>
        <dbReference type="ChEBI" id="CHEBI:15377"/>
        <dbReference type="ChEBI" id="CHEBI:29999"/>
        <dbReference type="ChEBI" id="CHEBI:43474"/>
        <dbReference type="ChEBI" id="CHEBI:83421"/>
        <dbReference type="EC" id="3.1.3.16"/>
    </reaction>
</comment>
<comment type="catalytic activity">
    <reaction>
        <text>O-phospho-L-threonyl-[protein] + H2O = L-threonyl-[protein] + phosphate</text>
        <dbReference type="Rhea" id="RHEA:47004"/>
        <dbReference type="Rhea" id="RHEA-COMP:11060"/>
        <dbReference type="Rhea" id="RHEA-COMP:11605"/>
        <dbReference type="ChEBI" id="CHEBI:15377"/>
        <dbReference type="ChEBI" id="CHEBI:30013"/>
        <dbReference type="ChEBI" id="CHEBI:43474"/>
        <dbReference type="ChEBI" id="CHEBI:61977"/>
        <dbReference type="EC" id="3.1.3.16"/>
    </reaction>
</comment>
<comment type="cofactor">
    <cofactor evidence="1">
        <name>Mg(2+)</name>
        <dbReference type="ChEBI" id="CHEBI:18420"/>
    </cofactor>
    <cofactor evidence="1">
        <name>Mn(2+)</name>
        <dbReference type="ChEBI" id="CHEBI:29035"/>
    </cofactor>
    <text evidence="1">Binds 2 magnesium or manganese ions per subunit.</text>
</comment>
<comment type="subunit">
    <text evidence="1">Interacts with MAP3K7/TAK1 and MAP3K5.</text>
</comment>
<comment type="subcellular location">
    <subcellularLocation>
        <location evidence="4">Membrane</location>
        <topology evidence="4">Single-pass type I membrane protein</topology>
    </subcellularLocation>
</comment>
<comment type="similarity">
    <text evidence="4">Belongs to the PP2C family.</text>
</comment>
<organism>
    <name type="scientific">Bos taurus</name>
    <name type="common">Bovine</name>
    <dbReference type="NCBI Taxonomy" id="9913"/>
    <lineage>
        <taxon>Eukaryota</taxon>
        <taxon>Metazoa</taxon>
        <taxon>Chordata</taxon>
        <taxon>Craniata</taxon>
        <taxon>Vertebrata</taxon>
        <taxon>Euteleostomi</taxon>
        <taxon>Mammalia</taxon>
        <taxon>Eutheria</taxon>
        <taxon>Laurasiatheria</taxon>
        <taxon>Artiodactyla</taxon>
        <taxon>Ruminantia</taxon>
        <taxon>Pecora</taxon>
        <taxon>Bovidae</taxon>
        <taxon>Bovinae</taxon>
        <taxon>Bos</taxon>
    </lineage>
</organism>